<dbReference type="EC" id="2.7.7.3" evidence="1"/>
<dbReference type="EMBL" id="CP000514">
    <property type="protein sequence ID" value="ABM20644.1"/>
    <property type="molecule type" value="Genomic_DNA"/>
</dbReference>
<dbReference type="RefSeq" id="WP_011786984.1">
    <property type="nucleotide sequence ID" value="NC_008740.1"/>
</dbReference>
<dbReference type="SMR" id="A1U6M5"/>
<dbReference type="STRING" id="351348.Maqu_3575"/>
<dbReference type="KEGG" id="maq:Maqu_3575"/>
<dbReference type="eggNOG" id="COG0669">
    <property type="taxonomic scope" value="Bacteria"/>
</dbReference>
<dbReference type="HOGENOM" id="CLU_100149_0_1_6"/>
<dbReference type="OrthoDB" id="9806661at2"/>
<dbReference type="UniPathway" id="UPA00241">
    <property type="reaction ID" value="UER00355"/>
</dbReference>
<dbReference type="Proteomes" id="UP000000998">
    <property type="component" value="Chromosome"/>
</dbReference>
<dbReference type="GO" id="GO:0005737">
    <property type="term" value="C:cytoplasm"/>
    <property type="evidence" value="ECO:0007669"/>
    <property type="project" value="UniProtKB-SubCell"/>
</dbReference>
<dbReference type="GO" id="GO:0005524">
    <property type="term" value="F:ATP binding"/>
    <property type="evidence" value="ECO:0007669"/>
    <property type="project" value="UniProtKB-KW"/>
</dbReference>
<dbReference type="GO" id="GO:0004595">
    <property type="term" value="F:pantetheine-phosphate adenylyltransferase activity"/>
    <property type="evidence" value="ECO:0007669"/>
    <property type="project" value="UniProtKB-UniRule"/>
</dbReference>
<dbReference type="GO" id="GO:0015937">
    <property type="term" value="P:coenzyme A biosynthetic process"/>
    <property type="evidence" value="ECO:0007669"/>
    <property type="project" value="UniProtKB-UniRule"/>
</dbReference>
<dbReference type="CDD" id="cd02163">
    <property type="entry name" value="PPAT"/>
    <property type="match status" value="1"/>
</dbReference>
<dbReference type="Gene3D" id="3.40.50.620">
    <property type="entry name" value="HUPs"/>
    <property type="match status" value="1"/>
</dbReference>
<dbReference type="HAMAP" id="MF_00151">
    <property type="entry name" value="PPAT_bact"/>
    <property type="match status" value="1"/>
</dbReference>
<dbReference type="InterPro" id="IPR004821">
    <property type="entry name" value="Cyt_trans-like"/>
</dbReference>
<dbReference type="InterPro" id="IPR001980">
    <property type="entry name" value="PPAT"/>
</dbReference>
<dbReference type="InterPro" id="IPR014729">
    <property type="entry name" value="Rossmann-like_a/b/a_fold"/>
</dbReference>
<dbReference type="NCBIfam" id="TIGR01510">
    <property type="entry name" value="coaD_prev_kdtB"/>
    <property type="match status" value="1"/>
</dbReference>
<dbReference type="NCBIfam" id="TIGR00125">
    <property type="entry name" value="cyt_tran_rel"/>
    <property type="match status" value="1"/>
</dbReference>
<dbReference type="PANTHER" id="PTHR21342">
    <property type="entry name" value="PHOSPHOPANTETHEINE ADENYLYLTRANSFERASE"/>
    <property type="match status" value="1"/>
</dbReference>
<dbReference type="PANTHER" id="PTHR21342:SF1">
    <property type="entry name" value="PHOSPHOPANTETHEINE ADENYLYLTRANSFERASE"/>
    <property type="match status" value="1"/>
</dbReference>
<dbReference type="Pfam" id="PF01467">
    <property type="entry name" value="CTP_transf_like"/>
    <property type="match status" value="1"/>
</dbReference>
<dbReference type="PRINTS" id="PR01020">
    <property type="entry name" value="LPSBIOSNTHSS"/>
</dbReference>
<dbReference type="SUPFAM" id="SSF52374">
    <property type="entry name" value="Nucleotidylyl transferase"/>
    <property type="match status" value="1"/>
</dbReference>
<feature type="chain" id="PRO_1000011173" description="Phosphopantetheine adenylyltransferase">
    <location>
        <begin position="1"/>
        <end position="160"/>
    </location>
</feature>
<feature type="binding site" evidence="1">
    <location>
        <begin position="9"/>
        <end position="10"/>
    </location>
    <ligand>
        <name>ATP</name>
        <dbReference type="ChEBI" id="CHEBI:30616"/>
    </ligand>
</feature>
<feature type="binding site" evidence="1">
    <location>
        <position position="9"/>
    </location>
    <ligand>
        <name>substrate</name>
    </ligand>
</feature>
<feature type="binding site" evidence="1">
    <location>
        <position position="17"/>
    </location>
    <ligand>
        <name>ATP</name>
        <dbReference type="ChEBI" id="CHEBI:30616"/>
    </ligand>
</feature>
<feature type="binding site" evidence="1">
    <location>
        <position position="41"/>
    </location>
    <ligand>
        <name>substrate</name>
    </ligand>
</feature>
<feature type="binding site" evidence="1">
    <location>
        <position position="73"/>
    </location>
    <ligand>
        <name>substrate</name>
    </ligand>
</feature>
<feature type="binding site" evidence="1">
    <location>
        <position position="87"/>
    </location>
    <ligand>
        <name>substrate</name>
    </ligand>
</feature>
<feature type="binding site" evidence="1">
    <location>
        <begin position="88"/>
        <end position="90"/>
    </location>
    <ligand>
        <name>ATP</name>
        <dbReference type="ChEBI" id="CHEBI:30616"/>
    </ligand>
</feature>
<feature type="binding site" evidence="1">
    <location>
        <position position="98"/>
    </location>
    <ligand>
        <name>ATP</name>
        <dbReference type="ChEBI" id="CHEBI:30616"/>
    </ligand>
</feature>
<feature type="binding site" evidence="1">
    <location>
        <begin position="123"/>
        <end position="129"/>
    </location>
    <ligand>
        <name>ATP</name>
        <dbReference type="ChEBI" id="CHEBI:30616"/>
    </ligand>
</feature>
<feature type="site" description="Transition state stabilizer" evidence="1">
    <location>
        <position position="17"/>
    </location>
</feature>
<sequence>MPKVIYPGTFDPITNGHTDLIERAGRMFDEIVVAVAYNPKKQPLLNLEERCELVRKATAHLPNVSVTGFSNLLADFVREQNASVILRGLRAVSDFEYEFQLADMNRRLAPEVESVFLTPANHLSYISSTLIREIASLGGDISEFVDPAVTEALQQKFSES</sequence>
<comment type="function">
    <text evidence="1">Reversibly transfers an adenylyl group from ATP to 4'-phosphopantetheine, yielding dephospho-CoA (dPCoA) and pyrophosphate.</text>
</comment>
<comment type="catalytic activity">
    <reaction evidence="1">
        <text>(R)-4'-phosphopantetheine + ATP + H(+) = 3'-dephospho-CoA + diphosphate</text>
        <dbReference type="Rhea" id="RHEA:19801"/>
        <dbReference type="ChEBI" id="CHEBI:15378"/>
        <dbReference type="ChEBI" id="CHEBI:30616"/>
        <dbReference type="ChEBI" id="CHEBI:33019"/>
        <dbReference type="ChEBI" id="CHEBI:57328"/>
        <dbReference type="ChEBI" id="CHEBI:61723"/>
        <dbReference type="EC" id="2.7.7.3"/>
    </reaction>
</comment>
<comment type="cofactor">
    <cofactor evidence="1">
        <name>Mg(2+)</name>
        <dbReference type="ChEBI" id="CHEBI:18420"/>
    </cofactor>
</comment>
<comment type="pathway">
    <text evidence="1">Cofactor biosynthesis; coenzyme A biosynthesis; CoA from (R)-pantothenate: step 4/5.</text>
</comment>
<comment type="subunit">
    <text evidence="1">Homohexamer.</text>
</comment>
<comment type="subcellular location">
    <subcellularLocation>
        <location evidence="1">Cytoplasm</location>
    </subcellularLocation>
</comment>
<comment type="similarity">
    <text evidence="1">Belongs to the bacterial CoaD family.</text>
</comment>
<reference key="1">
    <citation type="journal article" date="2011" name="Appl. Environ. Microbiol.">
        <title>Genomic potential of Marinobacter aquaeolei, a biogeochemical 'opportunitroph'.</title>
        <authorList>
            <person name="Singer E."/>
            <person name="Webb E.A."/>
            <person name="Nelson W.C."/>
            <person name="Heidelberg J.F."/>
            <person name="Ivanova N."/>
            <person name="Pati A."/>
            <person name="Edwards K.J."/>
        </authorList>
    </citation>
    <scope>NUCLEOTIDE SEQUENCE [LARGE SCALE GENOMIC DNA]</scope>
    <source>
        <strain>ATCC 700491 / DSM 11845 / VT8</strain>
    </source>
</reference>
<gene>
    <name evidence="1" type="primary">coaD</name>
    <name type="ordered locus">Maqu_3575</name>
</gene>
<evidence type="ECO:0000255" key="1">
    <source>
        <dbReference type="HAMAP-Rule" id="MF_00151"/>
    </source>
</evidence>
<organism>
    <name type="scientific">Marinobacter nauticus (strain ATCC 700491 / DSM 11845 / VT8)</name>
    <name type="common">Marinobacter aquaeolei</name>
    <dbReference type="NCBI Taxonomy" id="351348"/>
    <lineage>
        <taxon>Bacteria</taxon>
        <taxon>Pseudomonadati</taxon>
        <taxon>Pseudomonadota</taxon>
        <taxon>Gammaproteobacteria</taxon>
        <taxon>Pseudomonadales</taxon>
        <taxon>Marinobacteraceae</taxon>
        <taxon>Marinobacter</taxon>
    </lineage>
</organism>
<accession>A1U6M5</accession>
<name>COAD_MARN8</name>
<protein>
    <recommendedName>
        <fullName evidence="1">Phosphopantetheine adenylyltransferase</fullName>
        <ecNumber evidence="1">2.7.7.3</ecNumber>
    </recommendedName>
    <alternativeName>
        <fullName evidence="1">Dephospho-CoA pyrophosphorylase</fullName>
    </alternativeName>
    <alternativeName>
        <fullName evidence="1">Pantetheine-phosphate adenylyltransferase</fullName>
        <shortName evidence="1">PPAT</shortName>
    </alternativeName>
</protein>
<proteinExistence type="inferred from homology"/>
<keyword id="KW-0067">ATP-binding</keyword>
<keyword id="KW-0173">Coenzyme A biosynthesis</keyword>
<keyword id="KW-0963">Cytoplasm</keyword>
<keyword id="KW-0460">Magnesium</keyword>
<keyword id="KW-0547">Nucleotide-binding</keyword>
<keyword id="KW-0548">Nucleotidyltransferase</keyword>
<keyword id="KW-0808">Transferase</keyword>